<evidence type="ECO:0000255" key="1">
    <source>
        <dbReference type="HAMAP-Rule" id="MF_00175"/>
    </source>
</evidence>
<evidence type="ECO:0000255" key="2">
    <source>
        <dbReference type="PROSITE-ProRule" id="PRU01250"/>
    </source>
</evidence>
<sequence length="423" mass="46375">MADKKGSNSEKLLYCSFCGKSQHEVKKLIAGPSVFICDECIDLCNEIIRDEAAAAGVEASLSRSDLPSPQEIRDILDQYVIGQERAKKILAVAVYNHYKRLKHLDKKDDVELSKSNILLIGPTGSGKTLLAQTLARLLNVPFVIADATTLTEAGYVGEDVENIIQKLLQNCNYEVDKAQRGIVYIDEIDKISRKSDNPSITRDVSGEGVQQALLKLVEGTMASVPPQGGRKHPNQDFIQVDTTNILFICGGAFDGLEKVITDRTEKTGIGFGATVKSKQERDAGEVLRETEPEDLIKFGLIPELIGRLPVVATLGKLDEAALMKILVEPKNALVKQYHKLFAMERVELEIRPGALQAVARKAIRRKTGARGLRSIIEQALLDVMYELPAMKGVSKVIIDENVIDGDGKPLLIYEDTPKVAGSN</sequence>
<comment type="function">
    <text evidence="1">ATP-dependent specificity component of the Clp protease. It directs the protease to specific substrates. Can perform chaperone functions in the absence of ClpP.</text>
</comment>
<comment type="subunit">
    <text evidence="1">Component of the ClpX-ClpP complex. Forms a hexameric ring that, in the presence of ATP, binds to fourteen ClpP subunits assembled into a disk-like structure with a central cavity, resembling the structure of eukaryotic proteasomes.</text>
</comment>
<comment type="similarity">
    <text evidence="1">Belongs to the ClpX chaperone family.</text>
</comment>
<feature type="chain" id="PRO_1000097927" description="ATP-dependent Clp protease ATP-binding subunit ClpX">
    <location>
        <begin position="1"/>
        <end position="423"/>
    </location>
</feature>
<feature type="domain" description="ClpX-type ZB" evidence="2">
    <location>
        <begin position="3"/>
        <end position="56"/>
    </location>
</feature>
<feature type="binding site" evidence="2">
    <location>
        <position position="15"/>
    </location>
    <ligand>
        <name>Zn(2+)</name>
        <dbReference type="ChEBI" id="CHEBI:29105"/>
    </ligand>
</feature>
<feature type="binding site" evidence="2">
    <location>
        <position position="18"/>
    </location>
    <ligand>
        <name>Zn(2+)</name>
        <dbReference type="ChEBI" id="CHEBI:29105"/>
    </ligand>
</feature>
<feature type="binding site" evidence="2">
    <location>
        <position position="37"/>
    </location>
    <ligand>
        <name>Zn(2+)</name>
        <dbReference type="ChEBI" id="CHEBI:29105"/>
    </ligand>
</feature>
<feature type="binding site" evidence="2">
    <location>
        <position position="40"/>
    </location>
    <ligand>
        <name>Zn(2+)</name>
        <dbReference type="ChEBI" id="CHEBI:29105"/>
    </ligand>
</feature>
<feature type="binding site" evidence="1">
    <location>
        <begin position="122"/>
        <end position="129"/>
    </location>
    <ligand>
        <name>ATP</name>
        <dbReference type="ChEBI" id="CHEBI:30616"/>
    </ligand>
</feature>
<organism>
    <name type="scientific">Burkholderia ambifaria (strain MC40-6)</name>
    <dbReference type="NCBI Taxonomy" id="398577"/>
    <lineage>
        <taxon>Bacteria</taxon>
        <taxon>Pseudomonadati</taxon>
        <taxon>Pseudomonadota</taxon>
        <taxon>Betaproteobacteria</taxon>
        <taxon>Burkholderiales</taxon>
        <taxon>Burkholderiaceae</taxon>
        <taxon>Burkholderia</taxon>
        <taxon>Burkholderia cepacia complex</taxon>
    </lineage>
</organism>
<dbReference type="EMBL" id="CP001025">
    <property type="protein sequence ID" value="ACB64323.1"/>
    <property type="molecule type" value="Genomic_DNA"/>
</dbReference>
<dbReference type="RefSeq" id="WP_006754177.1">
    <property type="nucleotide sequence ID" value="NC_010551.1"/>
</dbReference>
<dbReference type="SMR" id="B1YRZ4"/>
<dbReference type="GeneID" id="93085887"/>
<dbReference type="KEGG" id="bac:BamMC406_1840"/>
<dbReference type="HOGENOM" id="CLU_014218_8_2_4"/>
<dbReference type="OrthoDB" id="9804062at2"/>
<dbReference type="Proteomes" id="UP000001680">
    <property type="component" value="Chromosome 1"/>
</dbReference>
<dbReference type="GO" id="GO:0009376">
    <property type="term" value="C:HslUV protease complex"/>
    <property type="evidence" value="ECO:0007669"/>
    <property type="project" value="TreeGrafter"/>
</dbReference>
<dbReference type="GO" id="GO:0005524">
    <property type="term" value="F:ATP binding"/>
    <property type="evidence" value="ECO:0007669"/>
    <property type="project" value="UniProtKB-UniRule"/>
</dbReference>
<dbReference type="GO" id="GO:0016887">
    <property type="term" value="F:ATP hydrolysis activity"/>
    <property type="evidence" value="ECO:0007669"/>
    <property type="project" value="InterPro"/>
</dbReference>
<dbReference type="GO" id="GO:0140662">
    <property type="term" value="F:ATP-dependent protein folding chaperone"/>
    <property type="evidence" value="ECO:0007669"/>
    <property type="project" value="InterPro"/>
</dbReference>
<dbReference type="GO" id="GO:0046983">
    <property type="term" value="F:protein dimerization activity"/>
    <property type="evidence" value="ECO:0007669"/>
    <property type="project" value="InterPro"/>
</dbReference>
<dbReference type="GO" id="GO:0051082">
    <property type="term" value="F:unfolded protein binding"/>
    <property type="evidence" value="ECO:0007669"/>
    <property type="project" value="UniProtKB-UniRule"/>
</dbReference>
<dbReference type="GO" id="GO:0008270">
    <property type="term" value="F:zinc ion binding"/>
    <property type="evidence" value="ECO:0007669"/>
    <property type="project" value="InterPro"/>
</dbReference>
<dbReference type="GO" id="GO:0051301">
    <property type="term" value="P:cell division"/>
    <property type="evidence" value="ECO:0007669"/>
    <property type="project" value="TreeGrafter"/>
</dbReference>
<dbReference type="GO" id="GO:0051603">
    <property type="term" value="P:proteolysis involved in protein catabolic process"/>
    <property type="evidence" value="ECO:0007669"/>
    <property type="project" value="TreeGrafter"/>
</dbReference>
<dbReference type="CDD" id="cd19497">
    <property type="entry name" value="RecA-like_ClpX"/>
    <property type="match status" value="1"/>
</dbReference>
<dbReference type="FunFam" id="1.10.8.60:FF:000002">
    <property type="entry name" value="ATP-dependent Clp protease ATP-binding subunit ClpX"/>
    <property type="match status" value="1"/>
</dbReference>
<dbReference type="FunFam" id="3.40.50.300:FF:000005">
    <property type="entry name" value="ATP-dependent Clp protease ATP-binding subunit ClpX"/>
    <property type="match status" value="1"/>
</dbReference>
<dbReference type="Gene3D" id="1.10.8.60">
    <property type="match status" value="1"/>
</dbReference>
<dbReference type="Gene3D" id="6.20.220.10">
    <property type="entry name" value="ClpX chaperone, C4-type zinc finger domain"/>
    <property type="match status" value="1"/>
</dbReference>
<dbReference type="Gene3D" id="3.40.50.300">
    <property type="entry name" value="P-loop containing nucleotide triphosphate hydrolases"/>
    <property type="match status" value="1"/>
</dbReference>
<dbReference type="HAMAP" id="MF_00175">
    <property type="entry name" value="ClpX"/>
    <property type="match status" value="1"/>
</dbReference>
<dbReference type="InterPro" id="IPR003593">
    <property type="entry name" value="AAA+_ATPase"/>
</dbReference>
<dbReference type="InterPro" id="IPR050052">
    <property type="entry name" value="ATP-dep_Clp_protease_ClpX"/>
</dbReference>
<dbReference type="InterPro" id="IPR003959">
    <property type="entry name" value="ATPase_AAA_core"/>
</dbReference>
<dbReference type="InterPro" id="IPR019489">
    <property type="entry name" value="Clp_ATPase_C"/>
</dbReference>
<dbReference type="InterPro" id="IPR004487">
    <property type="entry name" value="Clp_protease_ATP-bd_su_ClpX"/>
</dbReference>
<dbReference type="InterPro" id="IPR046425">
    <property type="entry name" value="ClpX_bact"/>
</dbReference>
<dbReference type="InterPro" id="IPR027417">
    <property type="entry name" value="P-loop_NTPase"/>
</dbReference>
<dbReference type="InterPro" id="IPR010603">
    <property type="entry name" value="Znf_CppX_C4"/>
</dbReference>
<dbReference type="InterPro" id="IPR038366">
    <property type="entry name" value="Znf_CppX_C4_sf"/>
</dbReference>
<dbReference type="NCBIfam" id="TIGR00382">
    <property type="entry name" value="clpX"/>
    <property type="match status" value="1"/>
</dbReference>
<dbReference type="NCBIfam" id="NF003745">
    <property type="entry name" value="PRK05342.1"/>
    <property type="match status" value="1"/>
</dbReference>
<dbReference type="PANTHER" id="PTHR48102:SF7">
    <property type="entry name" value="ATP-DEPENDENT CLP PROTEASE ATP-BINDING SUBUNIT CLPX-LIKE, MITOCHONDRIAL"/>
    <property type="match status" value="1"/>
</dbReference>
<dbReference type="PANTHER" id="PTHR48102">
    <property type="entry name" value="ATP-DEPENDENT CLP PROTEASE ATP-BINDING SUBUNIT CLPX-LIKE, MITOCHONDRIAL-RELATED"/>
    <property type="match status" value="1"/>
</dbReference>
<dbReference type="Pfam" id="PF07724">
    <property type="entry name" value="AAA_2"/>
    <property type="match status" value="1"/>
</dbReference>
<dbReference type="Pfam" id="PF10431">
    <property type="entry name" value="ClpB_D2-small"/>
    <property type="match status" value="1"/>
</dbReference>
<dbReference type="Pfam" id="PF06689">
    <property type="entry name" value="zf-C4_ClpX"/>
    <property type="match status" value="1"/>
</dbReference>
<dbReference type="SMART" id="SM00382">
    <property type="entry name" value="AAA"/>
    <property type="match status" value="1"/>
</dbReference>
<dbReference type="SMART" id="SM01086">
    <property type="entry name" value="ClpB_D2-small"/>
    <property type="match status" value="1"/>
</dbReference>
<dbReference type="SMART" id="SM00994">
    <property type="entry name" value="zf-C4_ClpX"/>
    <property type="match status" value="1"/>
</dbReference>
<dbReference type="SUPFAM" id="SSF57716">
    <property type="entry name" value="Glucocorticoid receptor-like (DNA-binding domain)"/>
    <property type="match status" value="1"/>
</dbReference>
<dbReference type="SUPFAM" id="SSF52540">
    <property type="entry name" value="P-loop containing nucleoside triphosphate hydrolases"/>
    <property type="match status" value="1"/>
</dbReference>
<dbReference type="PROSITE" id="PS51902">
    <property type="entry name" value="CLPX_ZB"/>
    <property type="match status" value="1"/>
</dbReference>
<protein>
    <recommendedName>
        <fullName evidence="1">ATP-dependent Clp protease ATP-binding subunit ClpX</fullName>
    </recommendedName>
</protein>
<keyword id="KW-0067">ATP-binding</keyword>
<keyword id="KW-0143">Chaperone</keyword>
<keyword id="KW-0479">Metal-binding</keyword>
<keyword id="KW-0547">Nucleotide-binding</keyword>
<keyword id="KW-0862">Zinc</keyword>
<name>CLPX_BURA4</name>
<proteinExistence type="inferred from homology"/>
<gene>
    <name evidence="1" type="primary">clpX</name>
    <name type="ordered locus">BamMC406_1840</name>
</gene>
<accession>B1YRZ4</accession>
<reference key="1">
    <citation type="submission" date="2008-04" db="EMBL/GenBank/DDBJ databases">
        <title>Complete sequence of chromosome 1 of Burkholderia ambifaria MC40-6.</title>
        <authorList>
            <person name="Copeland A."/>
            <person name="Lucas S."/>
            <person name="Lapidus A."/>
            <person name="Glavina del Rio T."/>
            <person name="Dalin E."/>
            <person name="Tice H."/>
            <person name="Pitluck S."/>
            <person name="Chain P."/>
            <person name="Malfatti S."/>
            <person name="Shin M."/>
            <person name="Vergez L."/>
            <person name="Lang D."/>
            <person name="Schmutz J."/>
            <person name="Larimer F."/>
            <person name="Land M."/>
            <person name="Hauser L."/>
            <person name="Kyrpides N."/>
            <person name="Lykidis A."/>
            <person name="Ramette A."/>
            <person name="Konstantinidis K."/>
            <person name="Tiedje J."/>
            <person name="Richardson P."/>
        </authorList>
    </citation>
    <scope>NUCLEOTIDE SEQUENCE [LARGE SCALE GENOMIC DNA]</scope>
    <source>
        <strain>MC40-6</strain>
    </source>
</reference>